<evidence type="ECO:0000255" key="1">
    <source>
        <dbReference type="HAMAP-Rule" id="MF_00564"/>
    </source>
</evidence>
<accession>Q7VXY3</accession>
<protein>
    <recommendedName>
        <fullName evidence="1">Ribonuclease PH</fullName>
        <shortName evidence="1">RNase PH</shortName>
        <ecNumber evidence="1">2.7.7.56</ecNumber>
    </recommendedName>
    <alternativeName>
        <fullName evidence="1">tRNA nucleotidyltransferase</fullName>
    </alternativeName>
</protein>
<comment type="function">
    <text evidence="1">Phosphorolytic 3'-5' exoribonuclease that plays an important role in tRNA 3'-end maturation. Removes nucleotide residues following the 3'-CCA terminus of tRNAs; can also add nucleotides to the ends of RNA molecules by using nucleoside diphosphates as substrates, but this may not be physiologically important. Probably plays a role in initiation of 16S rRNA degradation (leading to ribosome degradation) during starvation.</text>
</comment>
<comment type="catalytic activity">
    <reaction evidence="1">
        <text>tRNA(n+1) + phosphate = tRNA(n) + a ribonucleoside 5'-diphosphate</text>
        <dbReference type="Rhea" id="RHEA:10628"/>
        <dbReference type="Rhea" id="RHEA-COMP:17343"/>
        <dbReference type="Rhea" id="RHEA-COMP:17344"/>
        <dbReference type="ChEBI" id="CHEBI:43474"/>
        <dbReference type="ChEBI" id="CHEBI:57930"/>
        <dbReference type="ChEBI" id="CHEBI:173114"/>
        <dbReference type="EC" id="2.7.7.56"/>
    </reaction>
</comment>
<comment type="subunit">
    <text evidence="1">Homohexameric ring arranged as a trimer of dimers.</text>
</comment>
<comment type="similarity">
    <text evidence="1">Belongs to the RNase PH family.</text>
</comment>
<dbReference type="EC" id="2.7.7.56" evidence="1"/>
<dbReference type="EMBL" id="BX640415">
    <property type="protein sequence ID" value="CAE41877.1"/>
    <property type="molecule type" value="Genomic_DNA"/>
</dbReference>
<dbReference type="RefSeq" id="NP_880321.1">
    <property type="nucleotide sequence ID" value="NC_002929.2"/>
</dbReference>
<dbReference type="RefSeq" id="WP_003811149.1">
    <property type="nucleotide sequence ID" value="NZ_CP039022.1"/>
</dbReference>
<dbReference type="SMR" id="Q7VXY3"/>
<dbReference type="STRING" id="257313.BP1588"/>
<dbReference type="PaxDb" id="257313-BP1588"/>
<dbReference type="GeneID" id="69601506"/>
<dbReference type="KEGG" id="bpe:BP1588"/>
<dbReference type="PATRIC" id="fig|257313.5.peg.1705"/>
<dbReference type="eggNOG" id="COG0689">
    <property type="taxonomic scope" value="Bacteria"/>
</dbReference>
<dbReference type="HOGENOM" id="CLU_050858_0_0_4"/>
<dbReference type="Proteomes" id="UP000002676">
    <property type="component" value="Chromosome"/>
</dbReference>
<dbReference type="GO" id="GO:0000175">
    <property type="term" value="F:3'-5'-RNA exonuclease activity"/>
    <property type="evidence" value="ECO:0007669"/>
    <property type="project" value="UniProtKB-UniRule"/>
</dbReference>
<dbReference type="GO" id="GO:0000049">
    <property type="term" value="F:tRNA binding"/>
    <property type="evidence" value="ECO:0007669"/>
    <property type="project" value="UniProtKB-UniRule"/>
</dbReference>
<dbReference type="GO" id="GO:0009022">
    <property type="term" value="F:tRNA nucleotidyltransferase activity"/>
    <property type="evidence" value="ECO:0007669"/>
    <property type="project" value="UniProtKB-UniRule"/>
</dbReference>
<dbReference type="GO" id="GO:0016075">
    <property type="term" value="P:rRNA catabolic process"/>
    <property type="evidence" value="ECO:0007669"/>
    <property type="project" value="UniProtKB-UniRule"/>
</dbReference>
<dbReference type="GO" id="GO:0006364">
    <property type="term" value="P:rRNA processing"/>
    <property type="evidence" value="ECO:0007669"/>
    <property type="project" value="UniProtKB-KW"/>
</dbReference>
<dbReference type="GO" id="GO:0008033">
    <property type="term" value="P:tRNA processing"/>
    <property type="evidence" value="ECO:0007669"/>
    <property type="project" value="UniProtKB-UniRule"/>
</dbReference>
<dbReference type="CDD" id="cd11362">
    <property type="entry name" value="RNase_PH_bact"/>
    <property type="match status" value="1"/>
</dbReference>
<dbReference type="FunFam" id="3.30.230.70:FF:000003">
    <property type="entry name" value="Ribonuclease PH"/>
    <property type="match status" value="1"/>
</dbReference>
<dbReference type="Gene3D" id="3.30.230.70">
    <property type="entry name" value="GHMP Kinase, N-terminal domain"/>
    <property type="match status" value="1"/>
</dbReference>
<dbReference type="HAMAP" id="MF_00564">
    <property type="entry name" value="RNase_PH"/>
    <property type="match status" value="1"/>
</dbReference>
<dbReference type="InterPro" id="IPR001247">
    <property type="entry name" value="ExoRNase_PH_dom1"/>
</dbReference>
<dbReference type="InterPro" id="IPR015847">
    <property type="entry name" value="ExoRNase_PH_dom2"/>
</dbReference>
<dbReference type="InterPro" id="IPR036345">
    <property type="entry name" value="ExoRNase_PH_dom2_sf"/>
</dbReference>
<dbReference type="InterPro" id="IPR027408">
    <property type="entry name" value="PNPase/RNase_PH_dom_sf"/>
</dbReference>
<dbReference type="InterPro" id="IPR020568">
    <property type="entry name" value="Ribosomal_Su5_D2-typ_SF"/>
</dbReference>
<dbReference type="InterPro" id="IPR050080">
    <property type="entry name" value="RNase_PH"/>
</dbReference>
<dbReference type="InterPro" id="IPR002381">
    <property type="entry name" value="RNase_PH_bac-type"/>
</dbReference>
<dbReference type="InterPro" id="IPR018336">
    <property type="entry name" value="RNase_PH_CS"/>
</dbReference>
<dbReference type="NCBIfam" id="TIGR01966">
    <property type="entry name" value="RNasePH"/>
    <property type="match status" value="1"/>
</dbReference>
<dbReference type="PANTHER" id="PTHR11953">
    <property type="entry name" value="EXOSOME COMPLEX COMPONENT"/>
    <property type="match status" value="1"/>
</dbReference>
<dbReference type="PANTHER" id="PTHR11953:SF0">
    <property type="entry name" value="EXOSOME COMPLEX COMPONENT RRP41"/>
    <property type="match status" value="1"/>
</dbReference>
<dbReference type="Pfam" id="PF01138">
    <property type="entry name" value="RNase_PH"/>
    <property type="match status" value="1"/>
</dbReference>
<dbReference type="Pfam" id="PF03725">
    <property type="entry name" value="RNase_PH_C"/>
    <property type="match status" value="1"/>
</dbReference>
<dbReference type="SUPFAM" id="SSF55666">
    <property type="entry name" value="Ribonuclease PH domain 2-like"/>
    <property type="match status" value="1"/>
</dbReference>
<dbReference type="SUPFAM" id="SSF54211">
    <property type="entry name" value="Ribosomal protein S5 domain 2-like"/>
    <property type="match status" value="1"/>
</dbReference>
<dbReference type="PROSITE" id="PS01277">
    <property type="entry name" value="RIBONUCLEASE_PH"/>
    <property type="match status" value="1"/>
</dbReference>
<keyword id="KW-0548">Nucleotidyltransferase</keyword>
<keyword id="KW-1185">Reference proteome</keyword>
<keyword id="KW-0694">RNA-binding</keyword>
<keyword id="KW-0698">rRNA processing</keyword>
<keyword id="KW-0808">Transferase</keyword>
<keyword id="KW-0819">tRNA processing</keyword>
<keyword id="KW-0820">tRNA-binding</keyword>
<feature type="chain" id="PRO_0000139874" description="Ribonuclease PH">
    <location>
        <begin position="1"/>
        <end position="246"/>
    </location>
</feature>
<feature type="binding site" evidence="1">
    <location>
        <position position="95"/>
    </location>
    <ligand>
        <name>phosphate</name>
        <dbReference type="ChEBI" id="CHEBI:43474"/>
        <note>substrate</note>
    </ligand>
</feature>
<feature type="binding site" evidence="1">
    <location>
        <begin position="133"/>
        <end position="135"/>
    </location>
    <ligand>
        <name>phosphate</name>
        <dbReference type="ChEBI" id="CHEBI:43474"/>
        <note>substrate</note>
    </ligand>
</feature>
<name>RNPH_BORPE</name>
<proteinExistence type="inferred from homology"/>
<organism>
    <name type="scientific">Bordetella pertussis (strain Tohama I / ATCC BAA-589 / NCTC 13251)</name>
    <dbReference type="NCBI Taxonomy" id="257313"/>
    <lineage>
        <taxon>Bacteria</taxon>
        <taxon>Pseudomonadati</taxon>
        <taxon>Pseudomonadota</taxon>
        <taxon>Betaproteobacteria</taxon>
        <taxon>Burkholderiales</taxon>
        <taxon>Alcaligenaceae</taxon>
        <taxon>Bordetella</taxon>
    </lineage>
</organism>
<reference key="1">
    <citation type="journal article" date="2003" name="Nat. Genet.">
        <title>Comparative analysis of the genome sequences of Bordetella pertussis, Bordetella parapertussis and Bordetella bronchiseptica.</title>
        <authorList>
            <person name="Parkhill J."/>
            <person name="Sebaihia M."/>
            <person name="Preston A."/>
            <person name="Murphy L.D."/>
            <person name="Thomson N.R."/>
            <person name="Harris D.E."/>
            <person name="Holden M.T.G."/>
            <person name="Churcher C.M."/>
            <person name="Bentley S.D."/>
            <person name="Mungall K.L."/>
            <person name="Cerdeno-Tarraga A.-M."/>
            <person name="Temple L."/>
            <person name="James K.D."/>
            <person name="Harris B."/>
            <person name="Quail M.A."/>
            <person name="Achtman M."/>
            <person name="Atkin R."/>
            <person name="Baker S."/>
            <person name="Basham D."/>
            <person name="Bason N."/>
            <person name="Cherevach I."/>
            <person name="Chillingworth T."/>
            <person name="Collins M."/>
            <person name="Cronin A."/>
            <person name="Davis P."/>
            <person name="Doggett J."/>
            <person name="Feltwell T."/>
            <person name="Goble A."/>
            <person name="Hamlin N."/>
            <person name="Hauser H."/>
            <person name="Holroyd S."/>
            <person name="Jagels K."/>
            <person name="Leather S."/>
            <person name="Moule S."/>
            <person name="Norberczak H."/>
            <person name="O'Neil S."/>
            <person name="Ormond D."/>
            <person name="Price C."/>
            <person name="Rabbinowitsch E."/>
            <person name="Rutter S."/>
            <person name="Sanders M."/>
            <person name="Saunders D."/>
            <person name="Seeger K."/>
            <person name="Sharp S."/>
            <person name="Simmonds M."/>
            <person name="Skelton J."/>
            <person name="Squares R."/>
            <person name="Squares S."/>
            <person name="Stevens K."/>
            <person name="Unwin L."/>
            <person name="Whitehead S."/>
            <person name="Barrell B.G."/>
            <person name="Maskell D.J."/>
        </authorList>
    </citation>
    <scope>NUCLEOTIDE SEQUENCE [LARGE SCALE GENOMIC DNA]</scope>
    <source>
        <strain>Tohama I / ATCC BAA-589 / NCTC 13251</strain>
    </source>
</reference>
<gene>
    <name evidence="1" type="primary">rph</name>
    <name type="ordered locus">BP1588</name>
</gene>
<sequence>MSTSAADTLSRPSGRAVDALRPFSLERGFTRYAEGSVLVRAGNTHVLCTASVLEKVPPFLKGRGEGWVTAEYGMLPRATHTRGDREAARGKQSGRTQEIQRLIGRSLRAVFDLRLLGERTLHLDCDVLQADGGTRCASITGAWVAAADAVALLMQRGDLAHNPIRDAVAAVSVGLVDGRAVLDLDYQEDSACAADVNVVMTGSGAFVEVQGTGEGATFTRGELDTMLGLAEGGIAQLVRAQREALQ</sequence>